<feature type="chain" id="PRO_0000308452" description="Processive diacylglycerol beta-glucosyltransferase">
    <location>
        <begin position="1"/>
        <end position="383"/>
    </location>
</feature>
<accession>Q65IA4</accession>
<accession>Q62TQ5</accession>
<organism>
    <name type="scientific">Bacillus licheniformis (strain ATCC 14580 / DSM 13 / JCM 2505 / CCUG 7422 / NBRC 12200 / NCIMB 9375 / NCTC 10341 / NRRL NRS-1264 / Gibson 46)</name>
    <dbReference type="NCBI Taxonomy" id="279010"/>
    <lineage>
        <taxon>Bacteria</taxon>
        <taxon>Bacillati</taxon>
        <taxon>Bacillota</taxon>
        <taxon>Bacilli</taxon>
        <taxon>Bacillales</taxon>
        <taxon>Bacillaceae</taxon>
        <taxon>Bacillus</taxon>
    </lineage>
</organism>
<reference key="1">
    <citation type="journal article" date="2004" name="J. Mol. Microbiol. Biotechnol.">
        <title>The complete genome sequence of Bacillus licheniformis DSM13, an organism with great industrial potential.</title>
        <authorList>
            <person name="Veith B."/>
            <person name="Herzberg C."/>
            <person name="Steckel S."/>
            <person name="Feesche J."/>
            <person name="Maurer K.H."/>
            <person name="Ehrenreich P."/>
            <person name="Baeumer S."/>
            <person name="Henne A."/>
            <person name="Liesegang H."/>
            <person name="Merkl R."/>
            <person name="Ehrenreich A."/>
            <person name="Gottschalk G."/>
        </authorList>
    </citation>
    <scope>NUCLEOTIDE SEQUENCE [LARGE SCALE GENOMIC DNA]</scope>
    <source>
        <strain>ATCC 14580 / DSM 13 / JCM 2505 / CCUG 7422 / NBRC 12200 / NCIMB 9375 / NCTC 10341 / NRRL NRS-1264 / Gibson 46</strain>
    </source>
</reference>
<reference key="2">
    <citation type="journal article" date="2004" name="Genome Biol.">
        <title>Complete genome sequence of the industrial bacterium Bacillus licheniformis and comparisons with closely related Bacillus species.</title>
        <authorList>
            <person name="Rey M.W."/>
            <person name="Ramaiya P."/>
            <person name="Nelson B.A."/>
            <person name="Brody-Karpin S.D."/>
            <person name="Zaretsky E.J."/>
            <person name="Tang M."/>
            <person name="Lopez de Leon A."/>
            <person name="Xiang H."/>
            <person name="Gusti V."/>
            <person name="Clausen I.G."/>
            <person name="Olsen P.B."/>
            <person name="Rasmussen M.D."/>
            <person name="Andersen J.T."/>
            <person name="Joergensen P.L."/>
            <person name="Larsen T.S."/>
            <person name="Sorokin A."/>
            <person name="Bolotin A."/>
            <person name="Lapidus A."/>
            <person name="Galleron N."/>
            <person name="Ehrlich S.D."/>
            <person name="Berka R.M."/>
        </authorList>
    </citation>
    <scope>NUCLEOTIDE SEQUENCE [LARGE SCALE GENOMIC DNA]</scope>
    <source>
        <strain>ATCC 14580 / DSM 13 / JCM 2505 / CCUG 7422 / NBRC 12200 / NCIMB 9375 / NCTC 10341 / NRRL NRS-1264 / Gibson 46</strain>
    </source>
</reference>
<evidence type="ECO:0000255" key="1">
    <source>
        <dbReference type="HAMAP-Rule" id="MF_01280"/>
    </source>
</evidence>
<proteinExistence type="inferred from homology"/>
<protein>
    <recommendedName>
        <fullName evidence="1">Processive diacylglycerol beta-glucosyltransferase</fullName>
        <ecNumber>2.4.1.315</ecNumber>
    </recommendedName>
    <alternativeName>
        <fullName evidence="1">Beta-diglucosyldiacylglycerol synthase</fullName>
        <shortName evidence="1">Beta-DGS</shortName>
        <shortName evidence="1">DGlcDAG synthase</shortName>
        <shortName evidence="1">Glc2-DAG synthase</shortName>
    </alternativeName>
    <alternativeName>
        <fullName evidence="1">Beta-gentiobiosyldiacylglycerol synthase</fullName>
    </alternativeName>
    <alternativeName>
        <fullName evidence="1">Beta-monoglucosyldiacylglycerol synthase</fullName>
        <shortName evidence="1">Beta-MGS</shortName>
        <shortName evidence="1">MGlcDAG synthase</shortName>
    </alternativeName>
    <alternativeName>
        <fullName evidence="1">Beta-triglucosyldiacylglycerol synthase</fullName>
        <shortName evidence="1">TGlcDAG synthase</shortName>
    </alternativeName>
    <alternativeName>
        <fullName>Diglucosyl diacylglycerol synthase (1,6-linking)</fullName>
    </alternativeName>
    <alternativeName>
        <fullName evidence="1">Glucosyl-beta-1,6-glucosyldiacylglycerol synthase</fullName>
    </alternativeName>
    <alternativeName>
        <fullName evidence="1">UDP glucosyltransferase</fullName>
    </alternativeName>
    <alternativeName>
        <fullName evidence="1">UDP-glucose:1,2-diacylglycerol-3-beta-D-glucosyltransferase</fullName>
    </alternativeName>
</protein>
<dbReference type="EC" id="2.4.1.315"/>
<dbReference type="EMBL" id="CP000002">
    <property type="protein sequence ID" value="AAU23854.1"/>
    <property type="molecule type" value="Genomic_DNA"/>
</dbReference>
<dbReference type="EMBL" id="AE017333">
    <property type="protein sequence ID" value="AAU41210.1"/>
    <property type="molecule type" value="Genomic_DNA"/>
</dbReference>
<dbReference type="RefSeq" id="WP_003182832.1">
    <property type="nucleotide sequence ID" value="NC_006322.1"/>
</dbReference>
<dbReference type="SMR" id="Q65IA4"/>
<dbReference type="STRING" id="279010.BL01366"/>
<dbReference type="CAZy" id="GT28">
    <property type="family name" value="Glycosyltransferase Family 28"/>
</dbReference>
<dbReference type="KEGG" id="bld:BLi02330"/>
<dbReference type="KEGG" id="bli:BL01366"/>
<dbReference type="eggNOG" id="COG0707">
    <property type="taxonomic scope" value="Bacteria"/>
</dbReference>
<dbReference type="HOGENOM" id="CLU_028367_0_1_9"/>
<dbReference type="UniPathway" id="UPA00894"/>
<dbReference type="Proteomes" id="UP000000606">
    <property type="component" value="Chromosome"/>
</dbReference>
<dbReference type="GO" id="GO:0005886">
    <property type="term" value="C:plasma membrane"/>
    <property type="evidence" value="ECO:0007669"/>
    <property type="project" value="UniProtKB-SubCell"/>
</dbReference>
<dbReference type="GO" id="GO:0047228">
    <property type="term" value="F:1,2-diacylglycerol 3-glucosyltransferase activity"/>
    <property type="evidence" value="ECO:0007669"/>
    <property type="project" value="UniProtKB-UniRule"/>
</dbReference>
<dbReference type="GO" id="GO:0009246">
    <property type="term" value="P:enterobacterial common antigen biosynthetic process"/>
    <property type="evidence" value="ECO:0007669"/>
    <property type="project" value="UniProtKB-UniPathway"/>
</dbReference>
<dbReference type="GO" id="GO:0009247">
    <property type="term" value="P:glycolipid biosynthetic process"/>
    <property type="evidence" value="ECO:0007669"/>
    <property type="project" value="UniProtKB-UniRule"/>
</dbReference>
<dbReference type="GO" id="GO:0070395">
    <property type="term" value="P:lipoteichoic acid biosynthetic process"/>
    <property type="evidence" value="ECO:0007669"/>
    <property type="project" value="UniProtKB-UniRule"/>
</dbReference>
<dbReference type="CDD" id="cd17507">
    <property type="entry name" value="GT28_Beta-DGS-like"/>
    <property type="match status" value="1"/>
</dbReference>
<dbReference type="Gene3D" id="3.40.50.2000">
    <property type="entry name" value="Glycogen Phosphorylase B"/>
    <property type="match status" value="1"/>
</dbReference>
<dbReference type="HAMAP" id="MF_01280">
    <property type="entry name" value="Diacylglyc_glucosyltr"/>
    <property type="match status" value="1"/>
</dbReference>
<dbReference type="InterPro" id="IPR009695">
    <property type="entry name" value="Diacylglyc_glucosyltr_N"/>
</dbReference>
<dbReference type="InterPro" id="IPR001296">
    <property type="entry name" value="Glyco_trans_1"/>
</dbReference>
<dbReference type="InterPro" id="IPR050519">
    <property type="entry name" value="Glycosyltransf_28_UgtP"/>
</dbReference>
<dbReference type="InterPro" id="IPR023589">
    <property type="entry name" value="Pro_diacylglycrl_glcsylTrfase"/>
</dbReference>
<dbReference type="NCBIfam" id="NF010135">
    <property type="entry name" value="PRK13609.1"/>
    <property type="match status" value="1"/>
</dbReference>
<dbReference type="PANTHER" id="PTHR43025">
    <property type="entry name" value="MONOGALACTOSYLDIACYLGLYCEROL SYNTHASE"/>
    <property type="match status" value="1"/>
</dbReference>
<dbReference type="PANTHER" id="PTHR43025:SF3">
    <property type="entry name" value="MONOGALACTOSYLDIACYLGLYCEROL SYNTHASE 1, CHLOROPLASTIC"/>
    <property type="match status" value="1"/>
</dbReference>
<dbReference type="Pfam" id="PF00534">
    <property type="entry name" value="Glycos_transf_1"/>
    <property type="match status" value="1"/>
</dbReference>
<dbReference type="Pfam" id="PF06925">
    <property type="entry name" value="MGDG_synth"/>
    <property type="match status" value="1"/>
</dbReference>
<dbReference type="SUPFAM" id="SSF53756">
    <property type="entry name" value="UDP-Glycosyltransferase/glycogen phosphorylase"/>
    <property type="match status" value="1"/>
</dbReference>
<comment type="function">
    <text evidence="1">Processive glucosyltransferase involved in the biosynthesis of both the bilayer- and non-bilayer-forming membrane glucolipids. Is able to successively transfer up to three glucosyl residues to diacylglycerol (DAG), thereby catalyzing the formation of beta-monoglucosyl-DAG (3-O-(beta-D-glucopyranosyl)-1,2-diacyl-sn-glycerol), beta-diglucosyl-DAG (3-O-(beta-D-glucopyranosyl-beta-(1-&gt;6)-D-glucopyranosyl)-1,2-diacyl-sn-glycerol) and beta-triglucosyl-DAG (3-O-(beta-D-glucopyranosyl-beta-(1-&gt;6)-D-glucopyranosyl-beta-(1-&gt;6)-D-glucopyranosyl)-1,2-diacyl-sn-glycerol). Beta-diglucosyl-DAG is the predominant glycolipid found in Bacillales and is also used as a membrane anchor for lipoteichoic acid (LTA).</text>
</comment>
<comment type="catalytic activity">
    <reaction>
        <text>a 1,2-diacyl-3-O-(beta-D-glucopyranosyl)-sn-glycerol + UDP-alpha-D-glucose = a 1,2-diacyl-3-O-(beta-D-Glc-(1-&gt;6)-beta-D-Glc)-sn-glycerol + UDP + H(+)</text>
        <dbReference type="Rhea" id="RHEA:39031"/>
        <dbReference type="ChEBI" id="CHEBI:15378"/>
        <dbReference type="ChEBI" id="CHEBI:58223"/>
        <dbReference type="ChEBI" id="CHEBI:58885"/>
        <dbReference type="ChEBI" id="CHEBI:75799"/>
        <dbReference type="ChEBI" id="CHEBI:76264"/>
        <dbReference type="EC" id="2.4.1.315"/>
    </reaction>
</comment>
<comment type="catalytic activity">
    <reaction>
        <text>a 1,2-diacyl-3-O-(beta-D-Glc-(1-&gt;6)-beta-D-Glc)-sn-glycerol + UDP-alpha-D-glucose = a 1,2-diacyl-3-O-(beta-D-Glc-(1-&gt;6)-beta-D-Glc-(1-&gt;6)-beta-D-Glc)-sn-glycerol + UDP + H(+)</text>
        <dbReference type="Rhea" id="RHEA:39027"/>
        <dbReference type="ChEBI" id="CHEBI:15378"/>
        <dbReference type="ChEBI" id="CHEBI:58223"/>
        <dbReference type="ChEBI" id="CHEBI:58885"/>
        <dbReference type="ChEBI" id="CHEBI:76264"/>
        <dbReference type="ChEBI" id="CHEBI:76265"/>
        <dbReference type="EC" id="2.4.1.315"/>
    </reaction>
</comment>
<comment type="catalytic activity">
    <reaction evidence="1">
        <text>a 1,2-diacyl-sn-glycerol + UDP-alpha-D-glucose = a 1,2-diacyl-3-O-(beta-D-glucopyranosyl)-sn-glycerol + UDP + H(+)</text>
        <dbReference type="Rhea" id="RHEA:17285"/>
        <dbReference type="ChEBI" id="CHEBI:15378"/>
        <dbReference type="ChEBI" id="CHEBI:17815"/>
        <dbReference type="ChEBI" id="CHEBI:58223"/>
        <dbReference type="ChEBI" id="CHEBI:58885"/>
        <dbReference type="ChEBI" id="CHEBI:75799"/>
    </reaction>
</comment>
<comment type="pathway">
    <text evidence="1">Glycolipid metabolism; diglucosyl-diacylglycerol biosynthesis.</text>
</comment>
<comment type="subcellular location">
    <subcellularLocation>
        <location evidence="1">Cell membrane</location>
    </subcellularLocation>
</comment>
<comment type="similarity">
    <text evidence="1">Belongs to the glycosyltransferase 28 family. UgtP subfamily.</text>
</comment>
<gene>
    <name evidence="1" type="primary">ugtP</name>
    <name type="ordered locus">BLi02330</name>
    <name type="ordered locus">BL01366</name>
</gene>
<sequence length="383" mass="44168">MNTNKNILILTANYGNGHVQVAKTLYQECERLGFKNVTVSNLYQESNPIVSEITQYLYLKSFSIGKQFYRLFYYGVDKIYNKRKFNIYFKMGNKRLDQLVKKHQPDIIINTFPMIVVPEYRRRMGKVIPTFNVMTDFCLHKIWVHEHIDKYYVATDYVKEKLLEIGTHPSNVKITGIPIRRQFEEEMDKDKIYEKYQLSPDKKILLIMAGAHGVLKNVKELCESLVTKEDVQVVVVCGKNTMLKSSLEDIEALYPNKLRTLGYIERIDELFRVADCMITKPGGITLTEATAIGVPVILYKPVPGQEKENALFFEDRGAAIVVNRHEEILESVSSLLADEKKLNEMKKNIKSLHLSNSSEVILTDIIEQSEIIMNKKQTVRALS</sequence>
<keyword id="KW-0119">Carbohydrate metabolism</keyword>
<keyword id="KW-1003">Cell membrane</keyword>
<keyword id="KW-0328">Glycosyltransferase</keyword>
<keyword id="KW-0444">Lipid biosynthesis</keyword>
<keyword id="KW-0443">Lipid metabolism</keyword>
<keyword id="KW-0472">Membrane</keyword>
<keyword id="KW-1185">Reference proteome</keyword>
<keyword id="KW-0808">Transferase</keyword>
<name>UGTP_BACLD</name>